<sequence length="100" mass="11284">MTPWFLYLIRTADNKLYTGITTDVERRYQQHQSGKGAKALRGKGELTLAFSAPVGDRSLALRAEYRVKQLTKRQKERLVAEGAVFAELLSSLQTPEIKSD</sequence>
<protein>
    <recommendedName>
        <fullName evidence="1">UPF0213 protein YhbQ</fullName>
    </recommendedName>
</protein>
<dbReference type="EMBL" id="CP000468">
    <property type="protein sequence ID" value="ABJ02650.1"/>
    <property type="molecule type" value="Genomic_DNA"/>
</dbReference>
<dbReference type="RefSeq" id="WP_000189322.1">
    <property type="nucleotide sequence ID" value="NZ_CADILS010000003.1"/>
</dbReference>
<dbReference type="SMR" id="A1AG60"/>
<dbReference type="KEGG" id="ecv:APECO1_3275"/>
<dbReference type="HOGENOM" id="CLU_135650_0_1_6"/>
<dbReference type="Proteomes" id="UP000008216">
    <property type="component" value="Chromosome"/>
</dbReference>
<dbReference type="CDD" id="cd10456">
    <property type="entry name" value="GIY-YIG_UPF0213"/>
    <property type="match status" value="1"/>
</dbReference>
<dbReference type="FunFam" id="3.40.1440.10:FF:000002">
    <property type="entry name" value="UPF0213 protein YhbQ"/>
    <property type="match status" value="1"/>
</dbReference>
<dbReference type="Gene3D" id="3.40.1440.10">
    <property type="entry name" value="GIY-YIG endonuclease"/>
    <property type="match status" value="1"/>
</dbReference>
<dbReference type="HAMAP" id="MF_01029">
    <property type="entry name" value="UPF0213"/>
    <property type="match status" value="1"/>
</dbReference>
<dbReference type="InterPro" id="IPR000305">
    <property type="entry name" value="GIY-YIG_endonuc"/>
</dbReference>
<dbReference type="InterPro" id="IPR035901">
    <property type="entry name" value="GIY-YIG_endonuc_sf"/>
</dbReference>
<dbReference type="InterPro" id="IPR050190">
    <property type="entry name" value="UPF0213_domain"/>
</dbReference>
<dbReference type="InterPro" id="IPR022992">
    <property type="entry name" value="UPF0213_GIY-YIG_endonuc"/>
</dbReference>
<dbReference type="PANTHER" id="PTHR34477">
    <property type="entry name" value="UPF0213 PROTEIN YHBQ"/>
    <property type="match status" value="1"/>
</dbReference>
<dbReference type="PANTHER" id="PTHR34477:SF1">
    <property type="entry name" value="UPF0213 PROTEIN YHBQ"/>
    <property type="match status" value="1"/>
</dbReference>
<dbReference type="Pfam" id="PF01541">
    <property type="entry name" value="GIY-YIG"/>
    <property type="match status" value="1"/>
</dbReference>
<dbReference type="SMART" id="SM00465">
    <property type="entry name" value="GIYc"/>
    <property type="match status" value="1"/>
</dbReference>
<dbReference type="SUPFAM" id="SSF82771">
    <property type="entry name" value="GIY-YIG endonuclease"/>
    <property type="match status" value="1"/>
</dbReference>
<dbReference type="PROSITE" id="PS50164">
    <property type="entry name" value="GIY_YIG"/>
    <property type="match status" value="1"/>
</dbReference>
<gene>
    <name evidence="1" type="primary">yhbQ</name>
    <name type="ordered locus">Ecok1_31560</name>
    <name type="ORF">APECO1_3275</name>
</gene>
<comment type="similarity">
    <text evidence="1">Belongs to the UPF0213 family.</text>
</comment>
<keyword id="KW-1185">Reference proteome</keyword>
<feature type="chain" id="PRO_1000063663" description="UPF0213 protein YhbQ">
    <location>
        <begin position="1"/>
        <end position="100"/>
    </location>
</feature>
<feature type="domain" description="GIY-YIG" evidence="1">
    <location>
        <begin position="2"/>
        <end position="77"/>
    </location>
</feature>
<reference key="1">
    <citation type="journal article" date="2007" name="J. Bacteriol.">
        <title>The genome sequence of avian pathogenic Escherichia coli strain O1:K1:H7 shares strong similarities with human extraintestinal pathogenic E. coli genomes.</title>
        <authorList>
            <person name="Johnson T.J."/>
            <person name="Kariyawasam S."/>
            <person name="Wannemuehler Y."/>
            <person name="Mangiamele P."/>
            <person name="Johnson S.J."/>
            <person name="Doetkott C."/>
            <person name="Skyberg J.A."/>
            <person name="Lynne A.M."/>
            <person name="Johnson J.R."/>
            <person name="Nolan L.K."/>
        </authorList>
    </citation>
    <scope>NUCLEOTIDE SEQUENCE [LARGE SCALE GENOMIC DNA]</scope>
</reference>
<proteinExistence type="inferred from homology"/>
<organism>
    <name type="scientific">Escherichia coli O1:K1 / APEC</name>
    <dbReference type="NCBI Taxonomy" id="405955"/>
    <lineage>
        <taxon>Bacteria</taxon>
        <taxon>Pseudomonadati</taxon>
        <taxon>Pseudomonadota</taxon>
        <taxon>Gammaproteobacteria</taxon>
        <taxon>Enterobacterales</taxon>
        <taxon>Enterobacteriaceae</taxon>
        <taxon>Escherichia</taxon>
    </lineage>
</organism>
<evidence type="ECO:0000255" key="1">
    <source>
        <dbReference type="HAMAP-Rule" id="MF_01029"/>
    </source>
</evidence>
<name>YHBQ_ECOK1</name>
<accession>A1AG60</accession>